<protein>
    <recommendedName>
        <fullName evidence="1">Ribonuclease HII</fullName>
        <shortName evidence="1">RNase HII</shortName>
        <ecNumber evidence="1">3.1.26.4</ecNumber>
    </recommendedName>
</protein>
<keyword id="KW-0963">Cytoplasm</keyword>
<keyword id="KW-0255">Endonuclease</keyword>
<keyword id="KW-0378">Hydrolase</keyword>
<keyword id="KW-0464">Manganese</keyword>
<keyword id="KW-0479">Metal-binding</keyword>
<keyword id="KW-0540">Nuclease</keyword>
<accession>A8GMJ0</accession>
<name>RNH2_RICAH</name>
<feature type="chain" id="PRO_1000031194" description="Ribonuclease HII">
    <location>
        <begin position="1"/>
        <end position="193"/>
    </location>
</feature>
<feature type="domain" description="RNase H type-2" evidence="2">
    <location>
        <begin position="15"/>
        <end position="193"/>
    </location>
</feature>
<feature type="binding site" evidence="1">
    <location>
        <position position="21"/>
    </location>
    <ligand>
        <name>a divalent metal cation</name>
        <dbReference type="ChEBI" id="CHEBI:60240"/>
    </ligand>
</feature>
<feature type="binding site" evidence="1">
    <location>
        <position position="22"/>
    </location>
    <ligand>
        <name>a divalent metal cation</name>
        <dbReference type="ChEBI" id="CHEBI:60240"/>
    </ligand>
</feature>
<feature type="binding site" evidence="1">
    <location>
        <position position="112"/>
    </location>
    <ligand>
        <name>a divalent metal cation</name>
        <dbReference type="ChEBI" id="CHEBI:60240"/>
    </ligand>
</feature>
<proteinExistence type="inferred from homology"/>
<dbReference type="EC" id="3.1.26.4" evidence="1"/>
<dbReference type="EMBL" id="CP000847">
    <property type="protein sequence ID" value="ABV74615.1"/>
    <property type="molecule type" value="Genomic_DNA"/>
</dbReference>
<dbReference type="RefSeq" id="WP_012149249.1">
    <property type="nucleotide sequence ID" value="NC_009881.1"/>
</dbReference>
<dbReference type="SMR" id="A8GMJ0"/>
<dbReference type="STRING" id="293614.A1C_01485"/>
<dbReference type="KEGG" id="rak:A1C_01485"/>
<dbReference type="eggNOG" id="COG0164">
    <property type="taxonomic scope" value="Bacteria"/>
</dbReference>
<dbReference type="HOGENOM" id="CLU_036532_3_1_5"/>
<dbReference type="Proteomes" id="UP000006830">
    <property type="component" value="Chromosome"/>
</dbReference>
<dbReference type="GO" id="GO:0005737">
    <property type="term" value="C:cytoplasm"/>
    <property type="evidence" value="ECO:0007669"/>
    <property type="project" value="UniProtKB-SubCell"/>
</dbReference>
<dbReference type="GO" id="GO:0032299">
    <property type="term" value="C:ribonuclease H2 complex"/>
    <property type="evidence" value="ECO:0007669"/>
    <property type="project" value="TreeGrafter"/>
</dbReference>
<dbReference type="GO" id="GO:0030145">
    <property type="term" value="F:manganese ion binding"/>
    <property type="evidence" value="ECO:0007669"/>
    <property type="project" value="UniProtKB-UniRule"/>
</dbReference>
<dbReference type="GO" id="GO:0003723">
    <property type="term" value="F:RNA binding"/>
    <property type="evidence" value="ECO:0007669"/>
    <property type="project" value="InterPro"/>
</dbReference>
<dbReference type="GO" id="GO:0004523">
    <property type="term" value="F:RNA-DNA hybrid ribonuclease activity"/>
    <property type="evidence" value="ECO:0007669"/>
    <property type="project" value="UniProtKB-UniRule"/>
</dbReference>
<dbReference type="GO" id="GO:0043137">
    <property type="term" value="P:DNA replication, removal of RNA primer"/>
    <property type="evidence" value="ECO:0007669"/>
    <property type="project" value="TreeGrafter"/>
</dbReference>
<dbReference type="GO" id="GO:0006298">
    <property type="term" value="P:mismatch repair"/>
    <property type="evidence" value="ECO:0007669"/>
    <property type="project" value="TreeGrafter"/>
</dbReference>
<dbReference type="CDD" id="cd07182">
    <property type="entry name" value="RNase_HII_bacteria_HII_like"/>
    <property type="match status" value="1"/>
</dbReference>
<dbReference type="Gene3D" id="3.30.420.10">
    <property type="entry name" value="Ribonuclease H-like superfamily/Ribonuclease H"/>
    <property type="match status" value="1"/>
</dbReference>
<dbReference type="HAMAP" id="MF_00052_B">
    <property type="entry name" value="RNase_HII_B"/>
    <property type="match status" value="1"/>
</dbReference>
<dbReference type="InterPro" id="IPR022898">
    <property type="entry name" value="RNase_HII"/>
</dbReference>
<dbReference type="InterPro" id="IPR001352">
    <property type="entry name" value="RNase_HII/HIII"/>
</dbReference>
<dbReference type="InterPro" id="IPR024567">
    <property type="entry name" value="RNase_HII/HIII_dom"/>
</dbReference>
<dbReference type="InterPro" id="IPR012337">
    <property type="entry name" value="RNaseH-like_sf"/>
</dbReference>
<dbReference type="InterPro" id="IPR036397">
    <property type="entry name" value="RNaseH_sf"/>
</dbReference>
<dbReference type="NCBIfam" id="NF000594">
    <property type="entry name" value="PRK00015.1-1"/>
    <property type="match status" value="1"/>
</dbReference>
<dbReference type="NCBIfam" id="NF000595">
    <property type="entry name" value="PRK00015.1-3"/>
    <property type="match status" value="1"/>
</dbReference>
<dbReference type="PANTHER" id="PTHR10954">
    <property type="entry name" value="RIBONUCLEASE H2 SUBUNIT A"/>
    <property type="match status" value="1"/>
</dbReference>
<dbReference type="PANTHER" id="PTHR10954:SF18">
    <property type="entry name" value="RIBONUCLEASE HII"/>
    <property type="match status" value="1"/>
</dbReference>
<dbReference type="Pfam" id="PF01351">
    <property type="entry name" value="RNase_HII"/>
    <property type="match status" value="1"/>
</dbReference>
<dbReference type="SUPFAM" id="SSF53098">
    <property type="entry name" value="Ribonuclease H-like"/>
    <property type="match status" value="1"/>
</dbReference>
<dbReference type="PROSITE" id="PS51975">
    <property type="entry name" value="RNASE_H_2"/>
    <property type="match status" value="1"/>
</dbReference>
<comment type="function">
    <text evidence="1">Endonuclease that specifically degrades the RNA of RNA-DNA hybrids.</text>
</comment>
<comment type="catalytic activity">
    <reaction evidence="1">
        <text>Endonucleolytic cleavage to 5'-phosphomonoester.</text>
        <dbReference type="EC" id="3.1.26.4"/>
    </reaction>
</comment>
<comment type="cofactor">
    <cofactor evidence="1">
        <name>Mn(2+)</name>
        <dbReference type="ChEBI" id="CHEBI:29035"/>
    </cofactor>
    <cofactor evidence="1">
        <name>Mg(2+)</name>
        <dbReference type="ChEBI" id="CHEBI:18420"/>
    </cofactor>
    <text evidence="1">Manganese or magnesium. Binds 1 divalent metal ion per monomer in the absence of substrate. May bind a second metal ion after substrate binding.</text>
</comment>
<comment type="subcellular location">
    <subcellularLocation>
        <location evidence="1">Cytoplasm</location>
    </subcellularLocation>
</comment>
<comment type="similarity">
    <text evidence="1">Belongs to the RNase HII family.</text>
</comment>
<organism>
    <name type="scientific">Rickettsia akari (strain Hartford)</name>
    <dbReference type="NCBI Taxonomy" id="293614"/>
    <lineage>
        <taxon>Bacteria</taxon>
        <taxon>Pseudomonadati</taxon>
        <taxon>Pseudomonadota</taxon>
        <taxon>Alphaproteobacteria</taxon>
        <taxon>Rickettsiales</taxon>
        <taxon>Rickettsiaceae</taxon>
        <taxon>Rickettsieae</taxon>
        <taxon>Rickettsia</taxon>
        <taxon>spotted fever group</taxon>
    </lineage>
</organism>
<sequence length="193" mass="21470">MEVDLLHFEKKYHNYIVAGIDEAGRGPLAGPVVASAVIIDNANIIHGIKDSKKLSKKKRALLYEQITSNYVWAVAIITHTEIDKINILEATKKACSIAAANLNVKPEIVLVDGNMQFSDERFISIVNGDNLSLSIAAASIIAKVTRDRLMLELSAKFPQYLWHKNSGYGTKEHLEAINKYGLSPYHRKSFKCC</sequence>
<evidence type="ECO:0000255" key="1">
    <source>
        <dbReference type="HAMAP-Rule" id="MF_00052"/>
    </source>
</evidence>
<evidence type="ECO:0000255" key="2">
    <source>
        <dbReference type="PROSITE-ProRule" id="PRU01319"/>
    </source>
</evidence>
<reference key="1">
    <citation type="submission" date="2007-09" db="EMBL/GenBank/DDBJ databases">
        <title>Complete genome sequence of Rickettsia akari.</title>
        <authorList>
            <person name="Madan A."/>
            <person name="Fahey J."/>
            <person name="Helton E."/>
            <person name="Ketteman M."/>
            <person name="Madan A."/>
            <person name="Rodrigues S."/>
            <person name="Sanchez A."/>
            <person name="Whiting M."/>
            <person name="Dasch G."/>
            <person name="Eremeeva M."/>
        </authorList>
    </citation>
    <scope>NUCLEOTIDE SEQUENCE [LARGE SCALE GENOMIC DNA]</scope>
    <source>
        <strain>Hartford</strain>
    </source>
</reference>
<gene>
    <name evidence="1" type="primary">rnhB</name>
    <name type="ordered locus">A1C_01485</name>
</gene>